<feature type="chain" id="PRO_0000179805" description="Putative N-acetylmannosamine-6-phosphate 2-epimerase 1">
    <location>
        <begin position="1"/>
        <end position="233"/>
    </location>
</feature>
<organism>
    <name type="scientific">Streptococcus pneumoniae serotype 4 (strain ATCC BAA-334 / TIGR4)</name>
    <dbReference type="NCBI Taxonomy" id="170187"/>
    <lineage>
        <taxon>Bacteria</taxon>
        <taxon>Bacillati</taxon>
        <taxon>Bacillota</taxon>
        <taxon>Bacilli</taxon>
        <taxon>Lactobacillales</taxon>
        <taxon>Streptococcaceae</taxon>
        <taxon>Streptococcus</taxon>
    </lineage>
</organism>
<keyword id="KW-0119">Carbohydrate metabolism</keyword>
<keyword id="KW-0413">Isomerase</keyword>
<keyword id="KW-1185">Reference proteome</keyword>
<reference key="1">
    <citation type="journal article" date="2001" name="Science">
        <title>Complete genome sequence of a virulent isolate of Streptococcus pneumoniae.</title>
        <authorList>
            <person name="Tettelin H."/>
            <person name="Nelson K.E."/>
            <person name="Paulsen I.T."/>
            <person name="Eisen J.A."/>
            <person name="Read T.D."/>
            <person name="Peterson S.N."/>
            <person name="Heidelberg J.F."/>
            <person name="DeBoy R.T."/>
            <person name="Haft D.H."/>
            <person name="Dodson R.J."/>
            <person name="Durkin A.S."/>
            <person name="Gwinn M.L."/>
            <person name="Kolonay J.F."/>
            <person name="Nelson W.C."/>
            <person name="Peterson J.D."/>
            <person name="Umayam L.A."/>
            <person name="White O."/>
            <person name="Salzberg S.L."/>
            <person name="Lewis M.R."/>
            <person name="Radune D."/>
            <person name="Holtzapple E.K."/>
            <person name="Khouri H.M."/>
            <person name="Wolf A.M."/>
            <person name="Utterback T.R."/>
            <person name="Hansen C.L."/>
            <person name="McDonald L.A."/>
            <person name="Feldblyum T.V."/>
            <person name="Angiuoli S.V."/>
            <person name="Dickinson T."/>
            <person name="Hickey E.K."/>
            <person name="Holt I.E."/>
            <person name="Loftus B.J."/>
            <person name="Yang F."/>
            <person name="Smith H.O."/>
            <person name="Venter J.C."/>
            <person name="Dougherty B.A."/>
            <person name="Morrison D.A."/>
            <person name="Hollingshead S.K."/>
            <person name="Fraser C.M."/>
        </authorList>
    </citation>
    <scope>NUCLEOTIDE SEQUENCE [LARGE SCALE GENOMIC DNA]</scope>
    <source>
        <strain>ATCC BAA-334 / TIGR4</strain>
    </source>
</reference>
<evidence type="ECO:0000305" key="1"/>
<dbReference type="EC" id="5.1.3.9"/>
<dbReference type="EMBL" id="AE005672">
    <property type="protein sequence ID" value="AAK75428.1"/>
    <property type="molecule type" value="Genomic_DNA"/>
</dbReference>
<dbReference type="PIR" id="C95154">
    <property type="entry name" value="C95154"/>
</dbReference>
<dbReference type="RefSeq" id="WP_000078475.1">
    <property type="nucleotide sequence ID" value="NZ_CP155539.1"/>
</dbReference>
<dbReference type="SMR" id="Q97Q95"/>
<dbReference type="PaxDb" id="170187-SP_1330"/>
<dbReference type="EnsemblBacteria" id="AAK75428">
    <property type="protein sequence ID" value="AAK75428"/>
    <property type="gene ID" value="SP_1330"/>
</dbReference>
<dbReference type="KEGG" id="spn:SP_1330"/>
<dbReference type="eggNOG" id="COG3010">
    <property type="taxonomic scope" value="Bacteria"/>
</dbReference>
<dbReference type="PhylomeDB" id="Q97Q95"/>
<dbReference type="BioCyc" id="SPNE170187:G1FZB-1341-MONOMER"/>
<dbReference type="UniPathway" id="UPA00629">
    <property type="reaction ID" value="UER00682"/>
</dbReference>
<dbReference type="Proteomes" id="UP000000585">
    <property type="component" value="Chromosome"/>
</dbReference>
<dbReference type="GO" id="GO:0005829">
    <property type="term" value="C:cytosol"/>
    <property type="evidence" value="ECO:0007669"/>
    <property type="project" value="TreeGrafter"/>
</dbReference>
<dbReference type="GO" id="GO:0047465">
    <property type="term" value="F:N-acylglucosamine-6-phosphate 2-epimerase activity"/>
    <property type="evidence" value="ECO:0007669"/>
    <property type="project" value="UniProtKB-EC"/>
</dbReference>
<dbReference type="GO" id="GO:0005975">
    <property type="term" value="P:carbohydrate metabolic process"/>
    <property type="evidence" value="ECO:0007669"/>
    <property type="project" value="UniProtKB-UniRule"/>
</dbReference>
<dbReference type="GO" id="GO:0006053">
    <property type="term" value="P:N-acetylmannosamine catabolic process"/>
    <property type="evidence" value="ECO:0007669"/>
    <property type="project" value="TreeGrafter"/>
</dbReference>
<dbReference type="GO" id="GO:0019262">
    <property type="term" value="P:N-acetylneuraminate catabolic process"/>
    <property type="evidence" value="ECO:0007669"/>
    <property type="project" value="UniProtKB-UniRule"/>
</dbReference>
<dbReference type="CDD" id="cd04729">
    <property type="entry name" value="NanE"/>
    <property type="match status" value="1"/>
</dbReference>
<dbReference type="FunFam" id="3.20.20.70:FF:000035">
    <property type="entry name" value="Putative N-acetylmannosamine-6-phosphate 2-epimerase"/>
    <property type="match status" value="1"/>
</dbReference>
<dbReference type="Gene3D" id="3.20.20.70">
    <property type="entry name" value="Aldolase class I"/>
    <property type="match status" value="1"/>
</dbReference>
<dbReference type="HAMAP" id="MF_01235">
    <property type="entry name" value="ManNAc6P_epimer"/>
    <property type="match status" value="1"/>
</dbReference>
<dbReference type="InterPro" id="IPR013785">
    <property type="entry name" value="Aldolase_TIM"/>
</dbReference>
<dbReference type="InterPro" id="IPR007260">
    <property type="entry name" value="NanE"/>
</dbReference>
<dbReference type="InterPro" id="IPR011060">
    <property type="entry name" value="RibuloseP-bd_barrel"/>
</dbReference>
<dbReference type="NCBIfam" id="NF002231">
    <property type="entry name" value="PRK01130.1"/>
    <property type="match status" value="1"/>
</dbReference>
<dbReference type="PANTHER" id="PTHR36204">
    <property type="entry name" value="N-ACETYLMANNOSAMINE-6-PHOSPHATE 2-EPIMERASE-RELATED"/>
    <property type="match status" value="1"/>
</dbReference>
<dbReference type="PANTHER" id="PTHR36204:SF1">
    <property type="entry name" value="N-ACETYLMANNOSAMINE-6-PHOSPHATE 2-EPIMERASE-RELATED"/>
    <property type="match status" value="1"/>
</dbReference>
<dbReference type="Pfam" id="PF04131">
    <property type="entry name" value="NanE"/>
    <property type="match status" value="1"/>
</dbReference>
<dbReference type="SUPFAM" id="SSF51366">
    <property type="entry name" value="Ribulose-phoshate binding barrel"/>
    <property type="match status" value="1"/>
</dbReference>
<comment type="function">
    <text evidence="1">Converts N-acetylmannosamine-6-phosphate (ManNAc-6-P) to N-acetylglucosamine-6-phosphate (GlcNAc-6-P).</text>
</comment>
<comment type="catalytic activity">
    <reaction>
        <text>an N-acyl-D-glucosamine 6-phosphate = an N-acyl-D-mannosamine 6-phosphate</text>
        <dbReference type="Rhea" id="RHEA:23932"/>
        <dbReference type="ChEBI" id="CHEBI:57599"/>
        <dbReference type="ChEBI" id="CHEBI:57666"/>
        <dbReference type="EC" id="5.1.3.9"/>
    </reaction>
</comment>
<comment type="pathway">
    <text>Amino-sugar metabolism; N-acetylneuraminate degradation; D-fructose 6-phosphate from N-acetylneuraminate: step 3/5.</text>
</comment>
<comment type="similarity">
    <text evidence="1">Belongs to the NanE family.</text>
</comment>
<protein>
    <recommendedName>
        <fullName>Putative N-acetylmannosamine-6-phosphate 2-epimerase 1</fullName>
        <ecNumber>5.1.3.9</ecNumber>
    </recommendedName>
    <alternativeName>
        <fullName>ManNAc-6-P epimerase 1</fullName>
    </alternativeName>
</protein>
<gene>
    <name type="primary">nanE1</name>
    <name type="ordered locus">SP_1330</name>
</gene>
<name>NANE1_STRPN</name>
<proteinExistence type="inferred from homology"/>
<accession>Q97Q95</accession>
<sequence length="233" mass="25702">MSQIWTKEKFISQVQGGVIVSCQALPGEALYNEEFSLMPFMAKAALEAGAVGIRANSVRDIKAIQKVVDLPIIGIIKRDYPPQEPYITATMKEVDELVECGTTVIAFDATLRPRYDGLVVSEFIKKIKEKYPNQLLMADVSNLDEGLYAFKSGVDFVGTTLSGYTSTSVQSDEPDFELMKKLADFNIPVIAEGKIHYPEQLKKAYSLGVTSVVIGGAITRPKEIAQRFINVIK</sequence>